<keyword id="KW-0028">Amino-acid biosynthesis</keyword>
<keyword id="KW-0057">Aromatic amino acid biosynthesis</keyword>
<keyword id="KW-0456">Lyase</keyword>
<keyword id="KW-0822">Tryptophan biosynthesis</keyword>
<feature type="chain" id="PRO_1000076365" description="Tryptophan synthase alpha chain">
    <location>
        <begin position="1"/>
        <end position="267"/>
    </location>
</feature>
<feature type="active site" description="Proton acceptor" evidence="1">
    <location>
        <position position="49"/>
    </location>
</feature>
<feature type="active site" description="Proton acceptor" evidence="1">
    <location>
        <position position="60"/>
    </location>
</feature>
<sequence length="267" mass="27106">MSHIGVAFDKARAEGRAVLVGCMPAGFPTVEGSIAAMTAMVEAGVDVIEVEIPYSDPVMDGPVIQRASDIALAGGVRVADTLRIIEAVAATGVPVVTMTYWNPVEQYGVDAFARDLAAAGGTGLITPDLIPDEAQEWLAASDAHGLDRTFLVAPSSTDTRLEMTVEHCRGFVYATALMGVTGARTQASAAAPVLVSRVRGVTDLPVGVGLGTGTGAQASTVAGFADGVIVGSALIRCLLDAPSLPAGLTALRALSAELAAGVRTPAH</sequence>
<accession>A8LX37</accession>
<name>TRPA_SALAI</name>
<gene>
    <name evidence="1" type="primary">trpA</name>
    <name type="ordered locus">Sare_3395</name>
</gene>
<evidence type="ECO:0000255" key="1">
    <source>
        <dbReference type="HAMAP-Rule" id="MF_00131"/>
    </source>
</evidence>
<organism>
    <name type="scientific">Salinispora arenicola (strain CNS-205)</name>
    <dbReference type="NCBI Taxonomy" id="391037"/>
    <lineage>
        <taxon>Bacteria</taxon>
        <taxon>Bacillati</taxon>
        <taxon>Actinomycetota</taxon>
        <taxon>Actinomycetes</taxon>
        <taxon>Micromonosporales</taxon>
        <taxon>Micromonosporaceae</taxon>
        <taxon>Salinispora</taxon>
    </lineage>
</organism>
<protein>
    <recommendedName>
        <fullName evidence="1">Tryptophan synthase alpha chain</fullName>
        <ecNumber evidence="1">4.2.1.20</ecNumber>
    </recommendedName>
</protein>
<proteinExistence type="inferred from homology"/>
<dbReference type="EC" id="4.2.1.20" evidence="1"/>
<dbReference type="EMBL" id="CP000850">
    <property type="protein sequence ID" value="ABV99197.1"/>
    <property type="molecule type" value="Genomic_DNA"/>
</dbReference>
<dbReference type="SMR" id="A8LX37"/>
<dbReference type="STRING" id="391037.Sare_3395"/>
<dbReference type="KEGG" id="saq:Sare_3395"/>
<dbReference type="PATRIC" id="fig|391037.6.peg.3423"/>
<dbReference type="eggNOG" id="COG0159">
    <property type="taxonomic scope" value="Bacteria"/>
</dbReference>
<dbReference type="HOGENOM" id="CLU_016734_0_0_11"/>
<dbReference type="OrthoDB" id="9804578at2"/>
<dbReference type="UniPathway" id="UPA00035">
    <property type="reaction ID" value="UER00044"/>
</dbReference>
<dbReference type="GO" id="GO:0005829">
    <property type="term" value="C:cytosol"/>
    <property type="evidence" value="ECO:0007669"/>
    <property type="project" value="TreeGrafter"/>
</dbReference>
<dbReference type="GO" id="GO:0004834">
    <property type="term" value="F:tryptophan synthase activity"/>
    <property type="evidence" value="ECO:0007669"/>
    <property type="project" value="UniProtKB-UniRule"/>
</dbReference>
<dbReference type="CDD" id="cd04724">
    <property type="entry name" value="Tryptophan_synthase_alpha"/>
    <property type="match status" value="1"/>
</dbReference>
<dbReference type="FunFam" id="3.20.20.70:FF:000037">
    <property type="entry name" value="Tryptophan synthase alpha chain"/>
    <property type="match status" value="1"/>
</dbReference>
<dbReference type="Gene3D" id="3.20.20.70">
    <property type="entry name" value="Aldolase class I"/>
    <property type="match status" value="1"/>
</dbReference>
<dbReference type="HAMAP" id="MF_00131">
    <property type="entry name" value="Trp_synth_alpha"/>
    <property type="match status" value="1"/>
</dbReference>
<dbReference type="InterPro" id="IPR013785">
    <property type="entry name" value="Aldolase_TIM"/>
</dbReference>
<dbReference type="InterPro" id="IPR011060">
    <property type="entry name" value="RibuloseP-bd_barrel"/>
</dbReference>
<dbReference type="InterPro" id="IPR002028">
    <property type="entry name" value="Trp_synthase_suA"/>
</dbReference>
<dbReference type="NCBIfam" id="TIGR00262">
    <property type="entry name" value="trpA"/>
    <property type="match status" value="1"/>
</dbReference>
<dbReference type="PANTHER" id="PTHR43406:SF1">
    <property type="entry name" value="TRYPTOPHAN SYNTHASE ALPHA CHAIN, CHLOROPLASTIC"/>
    <property type="match status" value="1"/>
</dbReference>
<dbReference type="PANTHER" id="PTHR43406">
    <property type="entry name" value="TRYPTOPHAN SYNTHASE, ALPHA CHAIN"/>
    <property type="match status" value="1"/>
</dbReference>
<dbReference type="Pfam" id="PF00290">
    <property type="entry name" value="Trp_syntA"/>
    <property type="match status" value="1"/>
</dbReference>
<dbReference type="SUPFAM" id="SSF51366">
    <property type="entry name" value="Ribulose-phoshate binding barrel"/>
    <property type="match status" value="1"/>
</dbReference>
<reference key="1">
    <citation type="submission" date="2007-10" db="EMBL/GenBank/DDBJ databases">
        <title>Complete sequence of Salinispora arenicola CNS-205.</title>
        <authorList>
            <consortium name="US DOE Joint Genome Institute"/>
            <person name="Copeland A."/>
            <person name="Lucas S."/>
            <person name="Lapidus A."/>
            <person name="Barry K."/>
            <person name="Glavina del Rio T."/>
            <person name="Dalin E."/>
            <person name="Tice H."/>
            <person name="Pitluck S."/>
            <person name="Foster B."/>
            <person name="Schmutz J."/>
            <person name="Larimer F."/>
            <person name="Land M."/>
            <person name="Hauser L."/>
            <person name="Kyrpides N."/>
            <person name="Ivanova N."/>
            <person name="Jensen P.R."/>
            <person name="Moore B.S."/>
            <person name="Penn K."/>
            <person name="Jenkins C."/>
            <person name="Udwary D."/>
            <person name="Xiang L."/>
            <person name="Gontang E."/>
            <person name="Richardson P."/>
        </authorList>
    </citation>
    <scope>NUCLEOTIDE SEQUENCE [LARGE SCALE GENOMIC DNA]</scope>
    <source>
        <strain>CNS-205</strain>
    </source>
</reference>
<comment type="function">
    <text evidence="1">The alpha subunit is responsible for the aldol cleavage of indoleglycerol phosphate to indole and glyceraldehyde 3-phosphate.</text>
</comment>
<comment type="catalytic activity">
    <reaction evidence="1">
        <text>(1S,2R)-1-C-(indol-3-yl)glycerol 3-phosphate + L-serine = D-glyceraldehyde 3-phosphate + L-tryptophan + H2O</text>
        <dbReference type="Rhea" id="RHEA:10532"/>
        <dbReference type="ChEBI" id="CHEBI:15377"/>
        <dbReference type="ChEBI" id="CHEBI:33384"/>
        <dbReference type="ChEBI" id="CHEBI:57912"/>
        <dbReference type="ChEBI" id="CHEBI:58866"/>
        <dbReference type="ChEBI" id="CHEBI:59776"/>
        <dbReference type="EC" id="4.2.1.20"/>
    </reaction>
</comment>
<comment type="pathway">
    <text evidence="1">Amino-acid biosynthesis; L-tryptophan biosynthesis; L-tryptophan from chorismate: step 5/5.</text>
</comment>
<comment type="subunit">
    <text evidence="1">Tetramer of two alpha and two beta chains.</text>
</comment>
<comment type="similarity">
    <text evidence="1">Belongs to the TrpA family.</text>
</comment>